<feature type="chain" id="PRO_1000192652" description="Ribosomal protein L11 methyltransferase">
    <location>
        <begin position="1"/>
        <end position="292"/>
    </location>
</feature>
<feature type="binding site" evidence="1">
    <location>
        <position position="144"/>
    </location>
    <ligand>
        <name>S-adenosyl-L-methionine</name>
        <dbReference type="ChEBI" id="CHEBI:59789"/>
    </ligand>
</feature>
<feature type="binding site" evidence="1">
    <location>
        <position position="165"/>
    </location>
    <ligand>
        <name>S-adenosyl-L-methionine</name>
        <dbReference type="ChEBI" id="CHEBI:59789"/>
    </ligand>
</feature>
<feature type="binding site" evidence="1">
    <location>
        <position position="187"/>
    </location>
    <ligand>
        <name>S-adenosyl-L-methionine</name>
        <dbReference type="ChEBI" id="CHEBI:59789"/>
    </ligand>
</feature>
<feature type="binding site" evidence="1">
    <location>
        <position position="229"/>
    </location>
    <ligand>
        <name>S-adenosyl-L-methionine</name>
        <dbReference type="ChEBI" id="CHEBI:59789"/>
    </ligand>
</feature>
<dbReference type="EC" id="2.1.1.-" evidence="1"/>
<dbReference type="EMBL" id="CP000949">
    <property type="protein sequence ID" value="ACA75088.1"/>
    <property type="molecule type" value="Genomic_DNA"/>
</dbReference>
<dbReference type="SMR" id="B1J5U4"/>
<dbReference type="STRING" id="390235.PputW619_4608"/>
<dbReference type="KEGG" id="ppw:PputW619_4608"/>
<dbReference type="eggNOG" id="COG2264">
    <property type="taxonomic scope" value="Bacteria"/>
</dbReference>
<dbReference type="HOGENOM" id="CLU_049382_4_1_6"/>
<dbReference type="OrthoDB" id="9785995at2"/>
<dbReference type="GO" id="GO:0005829">
    <property type="term" value="C:cytosol"/>
    <property type="evidence" value="ECO:0007669"/>
    <property type="project" value="TreeGrafter"/>
</dbReference>
<dbReference type="GO" id="GO:0016279">
    <property type="term" value="F:protein-lysine N-methyltransferase activity"/>
    <property type="evidence" value="ECO:0007669"/>
    <property type="project" value="TreeGrafter"/>
</dbReference>
<dbReference type="GO" id="GO:0032259">
    <property type="term" value="P:methylation"/>
    <property type="evidence" value="ECO:0007669"/>
    <property type="project" value="UniProtKB-KW"/>
</dbReference>
<dbReference type="Gene3D" id="3.40.50.150">
    <property type="entry name" value="Vaccinia Virus protein VP39"/>
    <property type="match status" value="1"/>
</dbReference>
<dbReference type="HAMAP" id="MF_00735">
    <property type="entry name" value="Methyltr_PrmA"/>
    <property type="match status" value="1"/>
</dbReference>
<dbReference type="InterPro" id="IPR050078">
    <property type="entry name" value="Ribosomal_L11_MeTrfase_PrmA"/>
</dbReference>
<dbReference type="InterPro" id="IPR004498">
    <property type="entry name" value="Ribosomal_PrmA_MeTrfase"/>
</dbReference>
<dbReference type="InterPro" id="IPR029063">
    <property type="entry name" value="SAM-dependent_MTases_sf"/>
</dbReference>
<dbReference type="NCBIfam" id="TIGR00406">
    <property type="entry name" value="prmA"/>
    <property type="match status" value="1"/>
</dbReference>
<dbReference type="PANTHER" id="PTHR43648">
    <property type="entry name" value="ELECTRON TRANSFER FLAVOPROTEIN BETA SUBUNIT LYSINE METHYLTRANSFERASE"/>
    <property type="match status" value="1"/>
</dbReference>
<dbReference type="PANTHER" id="PTHR43648:SF1">
    <property type="entry name" value="ELECTRON TRANSFER FLAVOPROTEIN BETA SUBUNIT LYSINE METHYLTRANSFERASE"/>
    <property type="match status" value="1"/>
</dbReference>
<dbReference type="Pfam" id="PF06325">
    <property type="entry name" value="PrmA"/>
    <property type="match status" value="1"/>
</dbReference>
<dbReference type="PIRSF" id="PIRSF000401">
    <property type="entry name" value="RPL11_MTase"/>
    <property type="match status" value="1"/>
</dbReference>
<dbReference type="SUPFAM" id="SSF53335">
    <property type="entry name" value="S-adenosyl-L-methionine-dependent methyltransferases"/>
    <property type="match status" value="1"/>
</dbReference>
<gene>
    <name evidence="1" type="primary">prmA</name>
    <name type="ordered locus">PputW619_4608</name>
</gene>
<name>PRMA_PSEPW</name>
<evidence type="ECO:0000255" key="1">
    <source>
        <dbReference type="HAMAP-Rule" id="MF_00735"/>
    </source>
</evidence>
<reference key="1">
    <citation type="submission" date="2008-02" db="EMBL/GenBank/DDBJ databases">
        <title>Complete sequence of Pseudomonas putida W619.</title>
        <authorList>
            <person name="Copeland A."/>
            <person name="Lucas S."/>
            <person name="Lapidus A."/>
            <person name="Barry K."/>
            <person name="Detter J.C."/>
            <person name="Glavina del Rio T."/>
            <person name="Dalin E."/>
            <person name="Tice H."/>
            <person name="Pitluck S."/>
            <person name="Chain P."/>
            <person name="Malfatti S."/>
            <person name="Shin M."/>
            <person name="Vergez L."/>
            <person name="Schmutz J."/>
            <person name="Larimer F."/>
            <person name="Land M."/>
            <person name="Hauser L."/>
            <person name="Kyrpides N."/>
            <person name="Kim E."/>
            <person name="Taghavi S."/>
            <person name="Vangronsveld D."/>
            <person name="van der Lelie D."/>
            <person name="Richardson P."/>
        </authorList>
    </citation>
    <scope>NUCLEOTIDE SEQUENCE [LARGE SCALE GENOMIC DNA]</scope>
    <source>
        <strain>W619</strain>
    </source>
</reference>
<comment type="function">
    <text evidence="1">Methylates ribosomal protein L11.</text>
</comment>
<comment type="catalytic activity">
    <reaction evidence="1">
        <text>L-lysyl-[protein] + 3 S-adenosyl-L-methionine = N(6),N(6),N(6)-trimethyl-L-lysyl-[protein] + 3 S-adenosyl-L-homocysteine + 3 H(+)</text>
        <dbReference type="Rhea" id="RHEA:54192"/>
        <dbReference type="Rhea" id="RHEA-COMP:9752"/>
        <dbReference type="Rhea" id="RHEA-COMP:13826"/>
        <dbReference type="ChEBI" id="CHEBI:15378"/>
        <dbReference type="ChEBI" id="CHEBI:29969"/>
        <dbReference type="ChEBI" id="CHEBI:57856"/>
        <dbReference type="ChEBI" id="CHEBI:59789"/>
        <dbReference type="ChEBI" id="CHEBI:61961"/>
    </reaction>
</comment>
<comment type="subcellular location">
    <subcellularLocation>
        <location evidence="1">Cytoplasm</location>
    </subcellularLocation>
</comment>
<comment type="similarity">
    <text evidence="1">Belongs to the methyltransferase superfamily. PrmA family.</text>
</comment>
<proteinExistence type="inferred from homology"/>
<sequence>MPWLQVRLAISPEQAETYEDALLEVGAVSVTFMDAEDQPIFEPDLNTTPLWSHTHLLALFEADADPEQVFAHLRLLTGAELPEHQAEVIEDQDWERSWMDNFQPMRFGRRLWIVPSWHEAPEKDAVNLLLDPGLAFGTGTHPTTALCLEWLDGQQLEGTQVLDFGCGSGILAIAALLLGAREAVGTDIDVQAIEASRDNAQRNGVADEKLALYLPEHMPAMQADVLVANILAGPLVSLAPQLSGLVRPGGLLALSGILAEQGEEVAAAYAADFELDPIVVRDGWVRISGRRR</sequence>
<protein>
    <recommendedName>
        <fullName evidence="1">Ribosomal protein L11 methyltransferase</fullName>
        <shortName evidence="1">L11 Mtase</shortName>
        <ecNumber evidence="1">2.1.1.-</ecNumber>
    </recommendedName>
</protein>
<organism>
    <name type="scientific">Pseudomonas putida (strain W619)</name>
    <dbReference type="NCBI Taxonomy" id="390235"/>
    <lineage>
        <taxon>Bacteria</taxon>
        <taxon>Pseudomonadati</taxon>
        <taxon>Pseudomonadota</taxon>
        <taxon>Gammaproteobacteria</taxon>
        <taxon>Pseudomonadales</taxon>
        <taxon>Pseudomonadaceae</taxon>
        <taxon>Pseudomonas</taxon>
    </lineage>
</organism>
<accession>B1J5U4</accession>
<keyword id="KW-0963">Cytoplasm</keyword>
<keyword id="KW-0489">Methyltransferase</keyword>
<keyword id="KW-0949">S-adenosyl-L-methionine</keyword>
<keyword id="KW-0808">Transferase</keyword>